<comment type="function">
    <text>Acts through intracellular calcium in Malpighian tubule stellate cells to raise chloride conductance.</text>
</comment>
<comment type="subcellular location">
    <subcellularLocation>
        <location>Secreted</location>
    </subcellularLocation>
</comment>
<sequence length="160" mass="18277">MAKIVLCMVLLAFGRQVYGASLVPAPISEQDPELATCELQLSKYRRFILQAILSFEDVCDAYSSRPGGQDSDSEGWPFRHYAPPPTSQRGEIWAFFRLLMAQFGDKEFSPIIRDAVIERCRIKSQLQRDEKRNSVVLGKKQRFHSWGGKRSPEPPILPDY</sequence>
<name>LCK_DROME</name>
<organism>
    <name type="scientific">Drosophila melanogaster</name>
    <name type="common">Fruit fly</name>
    <dbReference type="NCBI Taxonomy" id="7227"/>
    <lineage>
        <taxon>Eukaryota</taxon>
        <taxon>Metazoa</taxon>
        <taxon>Ecdysozoa</taxon>
        <taxon>Arthropoda</taxon>
        <taxon>Hexapoda</taxon>
        <taxon>Insecta</taxon>
        <taxon>Pterygota</taxon>
        <taxon>Neoptera</taxon>
        <taxon>Endopterygota</taxon>
        <taxon>Diptera</taxon>
        <taxon>Brachycera</taxon>
        <taxon>Muscomorpha</taxon>
        <taxon>Ephydroidea</taxon>
        <taxon>Drosophilidae</taxon>
        <taxon>Drosophila</taxon>
        <taxon>Sophophora</taxon>
    </lineage>
</organism>
<proteinExistence type="evidence at protein level"/>
<accession>P81829</accession>
<accession>Q4V3G8</accession>
<accession>Q9U4A5</accession>
<accession>Q9VUF4</accession>
<dbReference type="EMBL" id="AE014296">
    <property type="protein sequence ID" value="AAF49731.2"/>
    <property type="molecule type" value="Genomic_DNA"/>
</dbReference>
<dbReference type="EMBL" id="BT023388">
    <property type="protein sequence ID" value="AAY55804.1"/>
    <property type="molecule type" value="mRNA"/>
</dbReference>
<dbReference type="EMBL" id="AF192342">
    <property type="protein sequence ID" value="AAF20066.1"/>
    <property type="molecule type" value="mRNA"/>
</dbReference>
<dbReference type="RefSeq" id="NP_524893.2">
    <property type="nucleotide sequence ID" value="NM_080154.5"/>
</dbReference>
<dbReference type="SMR" id="P81829"/>
<dbReference type="FunCoup" id="P81829">
    <property type="interactions" value="78"/>
</dbReference>
<dbReference type="STRING" id="7227.FBpp0075465"/>
<dbReference type="PaxDb" id="7227-FBpp0075465"/>
<dbReference type="DNASU" id="47746"/>
<dbReference type="EnsemblMetazoa" id="FBtr0075722">
    <property type="protein sequence ID" value="FBpp0075465"/>
    <property type="gene ID" value="FBgn0028418"/>
</dbReference>
<dbReference type="GeneID" id="47746"/>
<dbReference type="KEGG" id="dme:Dmel_CG13480"/>
<dbReference type="UCSC" id="CG13480-RA">
    <property type="organism name" value="d. melanogaster"/>
</dbReference>
<dbReference type="AGR" id="FB:FBgn0028418"/>
<dbReference type="CTD" id="47746"/>
<dbReference type="FlyBase" id="FBgn0028418">
    <property type="gene designation" value="Lk"/>
</dbReference>
<dbReference type="VEuPathDB" id="VectorBase:FBgn0028418"/>
<dbReference type="eggNOG" id="ENOG502TAY3">
    <property type="taxonomic scope" value="Eukaryota"/>
</dbReference>
<dbReference type="HOGENOM" id="CLU_1679752_0_0_1"/>
<dbReference type="InParanoid" id="P81829"/>
<dbReference type="OMA" id="AFFKLLM"/>
<dbReference type="OrthoDB" id="7756265at2759"/>
<dbReference type="PhylomeDB" id="P81829"/>
<dbReference type="BioGRID-ORCS" id="47746">
    <property type="hits" value="0 hits in 1 CRISPR screen"/>
</dbReference>
<dbReference type="GenomeRNAi" id="47746"/>
<dbReference type="PRO" id="PR:P81829"/>
<dbReference type="Proteomes" id="UP000000803">
    <property type="component" value="Chromosome 3L"/>
</dbReference>
<dbReference type="Bgee" id="FBgn0028418">
    <property type="expression patterns" value="Expressed in multidendritic neuron (Drosophila) in post-embryonic organism and 18 other cell types or tissues"/>
</dbReference>
<dbReference type="ExpressionAtlas" id="P81829">
    <property type="expression patterns" value="baseline and differential"/>
</dbReference>
<dbReference type="GO" id="GO:0005615">
    <property type="term" value="C:extracellular space"/>
    <property type="evidence" value="ECO:0000255"/>
    <property type="project" value="FlyBase"/>
</dbReference>
<dbReference type="GO" id="GO:0008613">
    <property type="term" value="F:diuretic hormone activity"/>
    <property type="evidence" value="ECO:0000314"/>
    <property type="project" value="FlyBase"/>
</dbReference>
<dbReference type="GO" id="GO:0005179">
    <property type="term" value="F:hormone activity"/>
    <property type="evidence" value="ECO:0000303"/>
    <property type="project" value="FlyBase"/>
</dbReference>
<dbReference type="GO" id="GO:0005184">
    <property type="term" value="F:neuropeptide hormone activity"/>
    <property type="evidence" value="ECO:0000315"/>
    <property type="project" value="FlyBase"/>
</dbReference>
<dbReference type="GO" id="GO:0048018">
    <property type="term" value="F:receptor ligand activity"/>
    <property type="evidence" value="ECO:0000314"/>
    <property type="project" value="FlyBase"/>
</dbReference>
<dbReference type="GO" id="GO:0007589">
    <property type="term" value="P:body fluid secretion"/>
    <property type="evidence" value="ECO:0000314"/>
    <property type="project" value="FlyBase"/>
</dbReference>
<dbReference type="GO" id="GO:0007186">
    <property type="term" value="P:G protein-coupled receptor signaling pathway"/>
    <property type="evidence" value="ECO:0000314"/>
    <property type="project" value="FlyBase"/>
</dbReference>
<dbReference type="GO" id="GO:2000252">
    <property type="term" value="P:negative regulation of feeding behavior"/>
    <property type="evidence" value="ECO:0000315"/>
    <property type="project" value="FlyBase"/>
</dbReference>
<dbReference type="GO" id="GO:0007218">
    <property type="term" value="P:neuropeptide signaling pathway"/>
    <property type="evidence" value="ECO:0000303"/>
    <property type="project" value="FlyBase"/>
</dbReference>
<dbReference type="GO" id="GO:0007204">
    <property type="term" value="P:positive regulation of cytosolic calcium ion concentration"/>
    <property type="evidence" value="ECO:0000314"/>
    <property type="project" value="FlyBase"/>
</dbReference>
<evidence type="ECO:0000255" key="1"/>
<evidence type="ECO:0000269" key="2">
    <source>
    </source>
</evidence>
<gene>
    <name type="primary">Lk</name>
    <name type="synonym">pp</name>
    <name type="ORF">CG13480</name>
</gene>
<feature type="signal peptide" evidence="1">
    <location>
        <begin position="1"/>
        <end position="19"/>
    </location>
</feature>
<feature type="propeptide" id="PRO_0000021580">
    <location>
        <begin position="20"/>
        <end position="130"/>
    </location>
</feature>
<feature type="peptide" id="PRO_0000021581" description="Leucokinin">
    <location>
        <begin position="133"/>
        <end position="147"/>
    </location>
</feature>
<feature type="propeptide" id="PRO_0000021582">
    <location>
        <begin position="151"/>
        <end position="160"/>
    </location>
</feature>
<feature type="modified residue" description="Glycine amide" evidence="2">
    <location>
        <position position="147"/>
    </location>
</feature>
<protein>
    <recommendedName>
        <fullName>Leucokinin</fullName>
        <shortName>DLK</shortName>
    </recommendedName>
</protein>
<reference key="1">
    <citation type="journal article" date="2000" name="Science">
        <title>The genome sequence of Drosophila melanogaster.</title>
        <authorList>
            <person name="Adams M.D."/>
            <person name="Celniker S.E."/>
            <person name="Holt R.A."/>
            <person name="Evans C.A."/>
            <person name="Gocayne J.D."/>
            <person name="Amanatides P.G."/>
            <person name="Scherer S.E."/>
            <person name="Li P.W."/>
            <person name="Hoskins R.A."/>
            <person name="Galle R.F."/>
            <person name="George R.A."/>
            <person name="Lewis S.E."/>
            <person name="Richards S."/>
            <person name="Ashburner M."/>
            <person name="Henderson S.N."/>
            <person name="Sutton G.G."/>
            <person name="Wortman J.R."/>
            <person name="Yandell M.D."/>
            <person name="Zhang Q."/>
            <person name="Chen L.X."/>
            <person name="Brandon R.C."/>
            <person name="Rogers Y.-H.C."/>
            <person name="Blazej R.G."/>
            <person name="Champe M."/>
            <person name="Pfeiffer B.D."/>
            <person name="Wan K.H."/>
            <person name="Doyle C."/>
            <person name="Baxter E.G."/>
            <person name="Helt G."/>
            <person name="Nelson C.R."/>
            <person name="Miklos G.L.G."/>
            <person name="Abril J.F."/>
            <person name="Agbayani A."/>
            <person name="An H.-J."/>
            <person name="Andrews-Pfannkoch C."/>
            <person name="Baldwin D."/>
            <person name="Ballew R.M."/>
            <person name="Basu A."/>
            <person name="Baxendale J."/>
            <person name="Bayraktaroglu L."/>
            <person name="Beasley E.M."/>
            <person name="Beeson K.Y."/>
            <person name="Benos P.V."/>
            <person name="Berman B.P."/>
            <person name="Bhandari D."/>
            <person name="Bolshakov S."/>
            <person name="Borkova D."/>
            <person name="Botchan M.R."/>
            <person name="Bouck J."/>
            <person name="Brokstein P."/>
            <person name="Brottier P."/>
            <person name="Burtis K.C."/>
            <person name="Busam D.A."/>
            <person name="Butler H."/>
            <person name="Cadieu E."/>
            <person name="Center A."/>
            <person name="Chandra I."/>
            <person name="Cherry J.M."/>
            <person name="Cawley S."/>
            <person name="Dahlke C."/>
            <person name="Davenport L.B."/>
            <person name="Davies P."/>
            <person name="de Pablos B."/>
            <person name="Delcher A."/>
            <person name="Deng Z."/>
            <person name="Mays A.D."/>
            <person name="Dew I."/>
            <person name="Dietz S.M."/>
            <person name="Dodson K."/>
            <person name="Doup L.E."/>
            <person name="Downes M."/>
            <person name="Dugan-Rocha S."/>
            <person name="Dunkov B.C."/>
            <person name="Dunn P."/>
            <person name="Durbin K.J."/>
            <person name="Evangelista C.C."/>
            <person name="Ferraz C."/>
            <person name="Ferriera S."/>
            <person name="Fleischmann W."/>
            <person name="Fosler C."/>
            <person name="Gabrielian A.E."/>
            <person name="Garg N.S."/>
            <person name="Gelbart W.M."/>
            <person name="Glasser K."/>
            <person name="Glodek A."/>
            <person name="Gong F."/>
            <person name="Gorrell J.H."/>
            <person name="Gu Z."/>
            <person name="Guan P."/>
            <person name="Harris M."/>
            <person name="Harris N.L."/>
            <person name="Harvey D.A."/>
            <person name="Heiman T.J."/>
            <person name="Hernandez J.R."/>
            <person name="Houck J."/>
            <person name="Hostin D."/>
            <person name="Houston K.A."/>
            <person name="Howland T.J."/>
            <person name="Wei M.-H."/>
            <person name="Ibegwam C."/>
            <person name="Jalali M."/>
            <person name="Kalush F."/>
            <person name="Karpen G.H."/>
            <person name="Ke Z."/>
            <person name="Kennison J.A."/>
            <person name="Ketchum K.A."/>
            <person name="Kimmel B.E."/>
            <person name="Kodira C.D."/>
            <person name="Kraft C.L."/>
            <person name="Kravitz S."/>
            <person name="Kulp D."/>
            <person name="Lai Z."/>
            <person name="Lasko P."/>
            <person name="Lei Y."/>
            <person name="Levitsky A.A."/>
            <person name="Li J.H."/>
            <person name="Li Z."/>
            <person name="Liang Y."/>
            <person name="Lin X."/>
            <person name="Liu X."/>
            <person name="Mattei B."/>
            <person name="McIntosh T.C."/>
            <person name="McLeod M.P."/>
            <person name="McPherson D."/>
            <person name="Merkulov G."/>
            <person name="Milshina N.V."/>
            <person name="Mobarry C."/>
            <person name="Morris J."/>
            <person name="Moshrefi A."/>
            <person name="Mount S.M."/>
            <person name="Moy M."/>
            <person name="Murphy B."/>
            <person name="Murphy L."/>
            <person name="Muzny D.M."/>
            <person name="Nelson D.L."/>
            <person name="Nelson D.R."/>
            <person name="Nelson K.A."/>
            <person name="Nixon K."/>
            <person name="Nusskern D.R."/>
            <person name="Pacleb J.M."/>
            <person name="Palazzolo M."/>
            <person name="Pittman G.S."/>
            <person name="Pan S."/>
            <person name="Pollard J."/>
            <person name="Puri V."/>
            <person name="Reese M.G."/>
            <person name="Reinert K."/>
            <person name="Remington K."/>
            <person name="Saunders R.D.C."/>
            <person name="Scheeler F."/>
            <person name="Shen H."/>
            <person name="Shue B.C."/>
            <person name="Siden-Kiamos I."/>
            <person name="Simpson M."/>
            <person name="Skupski M.P."/>
            <person name="Smith T.J."/>
            <person name="Spier E."/>
            <person name="Spradling A.C."/>
            <person name="Stapleton M."/>
            <person name="Strong R."/>
            <person name="Sun E."/>
            <person name="Svirskas R."/>
            <person name="Tector C."/>
            <person name="Turner R."/>
            <person name="Venter E."/>
            <person name="Wang A.H."/>
            <person name="Wang X."/>
            <person name="Wang Z.-Y."/>
            <person name="Wassarman D.A."/>
            <person name="Weinstock G.M."/>
            <person name="Weissenbach J."/>
            <person name="Williams S.M."/>
            <person name="Woodage T."/>
            <person name="Worley K.C."/>
            <person name="Wu D."/>
            <person name="Yang S."/>
            <person name="Yao Q.A."/>
            <person name="Ye J."/>
            <person name="Yeh R.-F."/>
            <person name="Zaveri J.S."/>
            <person name="Zhan M."/>
            <person name="Zhang G."/>
            <person name="Zhao Q."/>
            <person name="Zheng L."/>
            <person name="Zheng X.H."/>
            <person name="Zhong F.N."/>
            <person name="Zhong W."/>
            <person name="Zhou X."/>
            <person name="Zhu S.C."/>
            <person name="Zhu X."/>
            <person name="Smith H.O."/>
            <person name="Gibbs R.A."/>
            <person name="Myers E.W."/>
            <person name="Rubin G.M."/>
            <person name="Venter J.C."/>
        </authorList>
    </citation>
    <scope>NUCLEOTIDE SEQUENCE [LARGE SCALE GENOMIC DNA]</scope>
    <source>
        <strain>Berkeley</strain>
    </source>
</reference>
<reference key="2">
    <citation type="journal article" date="2002" name="Genome Biol.">
        <title>Annotation of the Drosophila melanogaster euchromatic genome: a systematic review.</title>
        <authorList>
            <person name="Misra S."/>
            <person name="Crosby M.A."/>
            <person name="Mungall C.J."/>
            <person name="Matthews B.B."/>
            <person name="Campbell K.S."/>
            <person name="Hradecky P."/>
            <person name="Huang Y."/>
            <person name="Kaminker J.S."/>
            <person name="Millburn G.H."/>
            <person name="Prochnik S.E."/>
            <person name="Smith C.D."/>
            <person name="Tupy J.L."/>
            <person name="Whitfield E.J."/>
            <person name="Bayraktaroglu L."/>
            <person name="Berman B.P."/>
            <person name="Bettencourt B.R."/>
            <person name="Celniker S.E."/>
            <person name="de Grey A.D.N.J."/>
            <person name="Drysdale R.A."/>
            <person name="Harris N.L."/>
            <person name="Richter J."/>
            <person name="Russo S."/>
            <person name="Schroeder A.J."/>
            <person name="Shu S.Q."/>
            <person name="Stapleton M."/>
            <person name="Yamada C."/>
            <person name="Ashburner M."/>
            <person name="Gelbart W.M."/>
            <person name="Rubin G.M."/>
            <person name="Lewis S.E."/>
        </authorList>
    </citation>
    <scope>GENOME REANNOTATION</scope>
    <source>
        <strain>Berkeley</strain>
    </source>
</reference>
<reference key="3">
    <citation type="submission" date="2005-05" db="EMBL/GenBank/DDBJ databases">
        <authorList>
            <person name="Stapleton M."/>
            <person name="Carlson J.W."/>
            <person name="Chavez C."/>
            <person name="Frise E."/>
            <person name="George R.A."/>
            <person name="Pacleb J.M."/>
            <person name="Park S."/>
            <person name="Wan K.H."/>
            <person name="Yu C."/>
            <person name="Celniker S.E."/>
        </authorList>
    </citation>
    <scope>NUCLEOTIDE SEQUENCE [LARGE SCALE MRNA]</scope>
    <source>
        <strain>Berkeley</strain>
    </source>
</reference>
<reference key="4">
    <citation type="journal article" date="1999" name="J. Exp. Biol.">
        <title>Isolation and characterization of a leucokinin-like peptide of Drosophila melanogaster.</title>
        <authorList>
            <person name="Terhzaz S."/>
            <person name="O'Connell F.C."/>
            <person name="Pollock V.P."/>
            <person name="Kean L."/>
            <person name="Davies S.A."/>
            <person name="Veenstra J.A."/>
            <person name="Dow J.A.T."/>
        </authorList>
    </citation>
    <scope>NUCLEOTIDE SEQUENCE [MRNA] OF 117-160</scope>
    <scope>PROTEIN SEQUENCE OF 133-147</scope>
    <scope>AMIDATION</scope>
    <source>
        <strain>Oregon-R</strain>
        <tissue>Neurosecretory cell</tissue>
    </source>
</reference>
<reference key="5">
    <citation type="journal article" date="2002" name="J. Biol. Chem.">
        <title>Peptidomics of the larval Drosophila melanogaster central nervous system.</title>
        <authorList>
            <person name="Baggerman G."/>
            <person name="Cerstiaens A."/>
            <person name="De Loof A."/>
            <person name="Schoofs L."/>
        </authorList>
    </citation>
    <scope>PROTEIN SEQUENCE OF 133-147</scope>
    <scope>AMIDATION AT GLY-147</scope>
    <source>
        <tissue>Larva</tissue>
    </source>
</reference>
<keyword id="KW-0027">Amidation</keyword>
<keyword id="KW-0165">Cleavage on pair of basic residues</keyword>
<keyword id="KW-0903">Direct protein sequencing</keyword>
<keyword id="KW-0527">Neuropeptide</keyword>
<keyword id="KW-1185">Reference proteome</keyword>
<keyword id="KW-0964">Secreted</keyword>
<keyword id="KW-0732">Signal</keyword>